<gene>
    <name evidence="1" type="primary">ispD</name>
    <name type="ordered locus">DIP1973</name>
</gene>
<organism>
    <name type="scientific">Corynebacterium diphtheriae (strain ATCC 700971 / NCTC 13129 / Biotype gravis)</name>
    <dbReference type="NCBI Taxonomy" id="257309"/>
    <lineage>
        <taxon>Bacteria</taxon>
        <taxon>Bacillati</taxon>
        <taxon>Actinomycetota</taxon>
        <taxon>Actinomycetes</taxon>
        <taxon>Mycobacteriales</taxon>
        <taxon>Corynebacteriaceae</taxon>
        <taxon>Corynebacterium</taxon>
    </lineage>
</organism>
<sequence length="244" mass="25999">MSRRVVALVAAAGKGTRLGADLPKAYVPLRDIPLVVRSVRAMITSAVVDEVIVIISPQMQDYAAALLLRWGLFSADIPVRLVHGGAERADSVWCGLQAIADTDAVVLIHDSARALTPPGMIARVARAVLDGNKAVIPVVPVADTIKTVHGTTVVATPPRRDLRAVQTPQGFDIAALRAANIAYQQQQPDFEATDDASLMEWFGTPVLCVDGDPMAFKVTTPLDYALAKAVTDQAEPTIFEVPSD</sequence>
<name>ISPD_CORDI</name>
<dbReference type="EC" id="2.7.7.60" evidence="1"/>
<dbReference type="EMBL" id="BX248359">
    <property type="protein sequence ID" value="CAE50504.1"/>
    <property type="molecule type" value="Genomic_DNA"/>
</dbReference>
<dbReference type="RefSeq" id="WP_003852854.1">
    <property type="nucleotide sequence ID" value="NC_002935.2"/>
</dbReference>
<dbReference type="SMR" id="Q6NFC1"/>
<dbReference type="STRING" id="257309.DIP1973"/>
<dbReference type="KEGG" id="cdi:DIP1973"/>
<dbReference type="HOGENOM" id="CLU_061281_1_1_11"/>
<dbReference type="UniPathway" id="UPA00056">
    <property type="reaction ID" value="UER00093"/>
</dbReference>
<dbReference type="Proteomes" id="UP000002198">
    <property type="component" value="Chromosome"/>
</dbReference>
<dbReference type="GO" id="GO:0050518">
    <property type="term" value="F:2-C-methyl-D-erythritol 4-phosphate cytidylyltransferase activity"/>
    <property type="evidence" value="ECO:0007669"/>
    <property type="project" value="UniProtKB-UniRule"/>
</dbReference>
<dbReference type="GO" id="GO:0019288">
    <property type="term" value="P:isopentenyl diphosphate biosynthetic process, methylerythritol 4-phosphate pathway"/>
    <property type="evidence" value="ECO:0007669"/>
    <property type="project" value="UniProtKB-UniRule"/>
</dbReference>
<dbReference type="CDD" id="cd02516">
    <property type="entry name" value="CDP-ME_synthetase"/>
    <property type="match status" value="1"/>
</dbReference>
<dbReference type="FunFam" id="3.90.550.10:FF:000003">
    <property type="entry name" value="2-C-methyl-D-erythritol 4-phosphate cytidylyltransferase"/>
    <property type="match status" value="1"/>
</dbReference>
<dbReference type="Gene3D" id="3.90.550.10">
    <property type="entry name" value="Spore Coat Polysaccharide Biosynthesis Protein SpsA, Chain A"/>
    <property type="match status" value="1"/>
</dbReference>
<dbReference type="HAMAP" id="MF_00108">
    <property type="entry name" value="IspD"/>
    <property type="match status" value="1"/>
</dbReference>
<dbReference type="InterPro" id="IPR001228">
    <property type="entry name" value="IspD"/>
</dbReference>
<dbReference type="InterPro" id="IPR034683">
    <property type="entry name" value="IspD/TarI"/>
</dbReference>
<dbReference type="InterPro" id="IPR050088">
    <property type="entry name" value="IspD/TarI_cytidylyltransf_bact"/>
</dbReference>
<dbReference type="InterPro" id="IPR018294">
    <property type="entry name" value="ISPD_synthase_CS"/>
</dbReference>
<dbReference type="InterPro" id="IPR029044">
    <property type="entry name" value="Nucleotide-diphossugar_trans"/>
</dbReference>
<dbReference type="NCBIfam" id="TIGR00453">
    <property type="entry name" value="ispD"/>
    <property type="match status" value="1"/>
</dbReference>
<dbReference type="PANTHER" id="PTHR32125">
    <property type="entry name" value="2-C-METHYL-D-ERYTHRITOL 4-PHOSPHATE CYTIDYLYLTRANSFERASE, CHLOROPLASTIC"/>
    <property type="match status" value="1"/>
</dbReference>
<dbReference type="PANTHER" id="PTHR32125:SF4">
    <property type="entry name" value="2-C-METHYL-D-ERYTHRITOL 4-PHOSPHATE CYTIDYLYLTRANSFERASE, CHLOROPLASTIC"/>
    <property type="match status" value="1"/>
</dbReference>
<dbReference type="Pfam" id="PF01128">
    <property type="entry name" value="IspD"/>
    <property type="match status" value="1"/>
</dbReference>
<dbReference type="SUPFAM" id="SSF53448">
    <property type="entry name" value="Nucleotide-diphospho-sugar transferases"/>
    <property type="match status" value="1"/>
</dbReference>
<dbReference type="PROSITE" id="PS01295">
    <property type="entry name" value="ISPD"/>
    <property type="match status" value="1"/>
</dbReference>
<accession>Q6NFC1</accession>
<comment type="function">
    <text evidence="1">Catalyzes the formation of 4-diphosphocytidyl-2-C-methyl-D-erythritol from CTP and 2-C-methyl-D-erythritol 4-phosphate (MEP).</text>
</comment>
<comment type="catalytic activity">
    <reaction evidence="1">
        <text>2-C-methyl-D-erythritol 4-phosphate + CTP + H(+) = 4-CDP-2-C-methyl-D-erythritol + diphosphate</text>
        <dbReference type="Rhea" id="RHEA:13429"/>
        <dbReference type="ChEBI" id="CHEBI:15378"/>
        <dbReference type="ChEBI" id="CHEBI:33019"/>
        <dbReference type="ChEBI" id="CHEBI:37563"/>
        <dbReference type="ChEBI" id="CHEBI:57823"/>
        <dbReference type="ChEBI" id="CHEBI:58262"/>
        <dbReference type="EC" id="2.7.7.60"/>
    </reaction>
</comment>
<comment type="pathway">
    <text evidence="1">Isoprenoid biosynthesis; isopentenyl diphosphate biosynthesis via DXP pathway; isopentenyl diphosphate from 1-deoxy-D-xylulose 5-phosphate: step 2/6.</text>
</comment>
<comment type="similarity">
    <text evidence="1">Belongs to the IspD/TarI cytidylyltransferase family. IspD subfamily.</text>
</comment>
<protein>
    <recommendedName>
        <fullName evidence="1">2-C-methyl-D-erythritol 4-phosphate cytidylyltransferase</fullName>
        <ecNumber evidence="1">2.7.7.60</ecNumber>
    </recommendedName>
    <alternativeName>
        <fullName evidence="1">4-diphosphocytidyl-2C-methyl-D-erythritol synthase</fullName>
    </alternativeName>
    <alternativeName>
        <fullName evidence="1">MEP cytidylyltransferase</fullName>
        <shortName evidence="1">MCT</shortName>
    </alternativeName>
</protein>
<feature type="chain" id="PRO_0000075568" description="2-C-methyl-D-erythritol 4-phosphate cytidylyltransferase">
    <location>
        <begin position="1"/>
        <end position="244"/>
    </location>
</feature>
<feature type="site" description="Transition state stabilizer" evidence="1">
    <location>
        <position position="17"/>
    </location>
</feature>
<feature type="site" description="Transition state stabilizer" evidence="1">
    <location>
        <position position="24"/>
    </location>
</feature>
<feature type="site" description="Positions MEP for the nucleophilic attack" evidence="1">
    <location>
        <position position="159"/>
    </location>
</feature>
<feature type="site" description="Positions MEP for the nucleophilic attack" evidence="1">
    <location>
        <position position="217"/>
    </location>
</feature>
<evidence type="ECO:0000255" key="1">
    <source>
        <dbReference type="HAMAP-Rule" id="MF_00108"/>
    </source>
</evidence>
<proteinExistence type="inferred from homology"/>
<keyword id="KW-0414">Isoprene biosynthesis</keyword>
<keyword id="KW-0548">Nucleotidyltransferase</keyword>
<keyword id="KW-1185">Reference proteome</keyword>
<keyword id="KW-0808">Transferase</keyword>
<reference key="1">
    <citation type="journal article" date="2003" name="Nucleic Acids Res.">
        <title>The complete genome sequence and analysis of Corynebacterium diphtheriae NCTC13129.</title>
        <authorList>
            <person name="Cerdeno-Tarraga A.-M."/>
            <person name="Efstratiou A."/>
            <person name="Dover L.G."/>
            <person name="Holden M.T.G."/>
            <person name="Pallen M.J."/>
            <person name="Bentley S.D."/>
            <person name="Besra G.S."/>
            <person name="Churcher C.M."/>
            <person name="James K.D."/>
            <person name="De Zoysa A."/>
            <person name="Chillingworth T."/>
            <person name="Cronin A."/>
            <person name="Dowd L."/>
            <person name="Feltwell T."/>
            <person name="Hamlin N."/>
            <person name="Holroyd S."/>
            <person name="Jagels K."/>
            <person name="Moule S."/>
            <person name="Quail M.A."/>
            <person name="Rabbinowitsch E."/>
            <person name="Rutherford K.M."/>
            <person name="Thomson N.R."/>
            <person name="Unwin L."/>
            <person name="Whitehead S."/>
            <person name="Barrell B.G."/>
            <person name="Parkhill J."/>
        </authorList>
    </citation>
    <scope>NUCLEOTIDE SEQUENCE [LARGE SCALE GENOMIC DNA]</scope>
    <source>
        <strain>ATCC 700971 / NCTC 13129 / Biotype gravis</strain>
    </source>
</reference>